<evidence type="ECO:0000250" key="1">
    <source>
        <dbReference type="UniProtKB" id="P02240"/>
    </source>
</evidence>
<evidence type="ECO:0000250" key="2">
    <source>
        <dbReference type="UniProtKB" id="Q3C1F7"/>
    </source>
</evidence>
<evidence type="ECO:0000255" key="3">
    <source>
        <dbReference type="PROSITE-ProRule" id="PRU00238"/>
    </source>
</evidence>
<evidence type="ECO:0000269" key="4">
    <source>
    </source>
</evidence>
<evidence type="ECO:0000269" key="5">
    <source>
    </source>
</evidence>
<evidence type="ECO:0000269" key="6">
    <source>
    </source>
</evidence>
<evidence type="ECO:0000269" key="7">
    <source>
    </source>
</evidence>
<evidence type="ECO:0000269" key="8">
    <source>
    </source>
</evidence>
<evidence type="ECO:0000269" key="9">
    <source>
    </source>
</evidence>
<evidence type="ECO:0000269" key="10">
    <source>
    </source>
</evidence>
<evidence type="ECO:0000269" key="11">
    <source>
    </source>
</evidence>
<evidence type="ECO:0000269" key="12">
    <source>
    </source>
</evidence>
<evidence type="ECO:0000269" key="13">
    <source>
    </source>
</evidence>
<evidence type="ECO:0000269" key="14">
    <source>
    </source>
</evidence>
<evidence type="ECO:0000303" key="15">
    <source>
    </source>
</evidence>
<evidence type="ECO:0000303" key="16">
    <source>
    </source>
</evidence>
<evidence type="ECO:0000303" key="17">
    <source>
    </source>
</evidence>
<evidence type="ECO:0000303" key="18">
    <source>
    </source>
</evidence>
<evidence type="ECO:0000303" key="19">
    <source>
    </source>
</evidence>
<evidence type="ECO:0000303" key="20">
    <source>
    </source>
</evidence>
<evidence type="ECO:0000303" key="21">
    <source>
    </source>
</evidence>
<evidence type="ECO:0000305" key="22"/>
<evidence type="ECO:0000305" key="23">
    <source>
    </source>
</evidence>
<evidence type="ECO:0000312" key="24">
    <source>
        <dbReference type="EMBL" id="KRH34687.1"/>
    </source>
</evidence>
<evidence type="ECO:0007829" key="25">
    <source>
        <dbReference type="PDB" id="1BIN"/>
    </source>
</evidence>
<name>LGB3_SOYBN</name>
<protein>
    <recommendedName>
        <fullName evidence="18">Leghemoglobin 3</fullName>
        <shortName evidence="18">GmLb3</shortName>
    </recommendedName>
    <alternativeName>
        <fullName evidence="19">Hemoglobin 2-4</fullName>
        <shortName evidence="19">GmGLB2-4</shortName>
    </alternativeName>
    <alternativeName>
        <fullName evidence="16">Leghemoglobin alpha</fullName>
        <shortName evidence="17">GmLba</shortName>
        <shortName evidence="15 19">Leghemoglobin A</shortName>
    </alternativeName>
    <alternativeName>
        <fullName>Nodulin-2</fullName>
        <shortName>N-2</shortName>
    </alternativeName>
</protein>
<accession>P02238</accession>
<accession>C6T4A7</accession>
<organism>
    <name type="scientific">Glycine max</name>
    <name type="common">Soybean</name>
    <name type="synonym">Glycine hispida</name>
    <dbReference type="NCBI Taxonomy" id="3847"/>
    <lineage>
        <taxon>Eukaryota</taxon>
        <taxon>Viridiplantae</taxon>
        <taxon>Streptophyta</taxon>
        <taxon>Embryophyta</taxon>
        <taxon>Tracheophyta</taxon>
        <taxon>Spermatophyta</taxon>
        <taxon>Magnoliopsida</taxon>
        <taxon>eudicotyledons</taxon>
        <taxon>Gunneridae</taxon>
        <taxon>Pentapetalae</taxon>
        <taxon>rosids</taxon>
        <taxon>fabids</taxon>
        <taxon>Fabales</taxon>
        <taxon>Fabaceae</taxon>
        <taxon>Papilionoideae</taxon>
        <taxon>50 kb inversion clade</taxon>
        <taxon>NPAAA clade</taxon>
        <taxon>indigoferoid/millettioid clade</taxon>
        <taxon>Phaseoleae</taxon>
        <taxon>Glycine</taxon>
        <taxon>Glycine subgen. Soja</taxon>
    </lineage>
</organism>
<reference key="1">
    <citation type="journal article" date="1982" name="Nucleic Acids Res.">
        <title>The primary structures of two leghemoglobin genes from soybean.</title>
        <authorList>
            <person name="Hyldig-Nielsen J.J."/>
            <person name="Jensen E.O."/>
            <person name="Paludan K."/>
            <person name="Wiborg O."/>
            <person name="Garrett R."/>
            <person name="Joergensen P."/>
            <person name="Marcker K.A."/>
        </authorList>
    </citation>
    <scope>NUCLEOTIDE SEQUENCE [GENOMIC DNA]</scope>
</reference>
<reference key="2">
    <citation type="submission" date="2009-08" db="EMBL/GenBank/DDBJ databases">
        <authorList>
            <person name="Cheung F."/>
            <person name="Xiao Y."/>
            <person name="Chan A."/>
            <person name="Moskal W."/>
            <person name="Town C.D."/>
        </authorList>
    </citation>
    <scope>NUCLEOTIDE SEQUENCE [MRNA]</scope>
</reference>
<reference key="3">
    <citation type="journal article" date="2010" name="Nature">
        <title>Genome sequence of the palaeopolyploid soybean.</title>
        <authorList>
            <person name="Schmutz J."/>
            <person name="Cannon S.B."/>
            <person name="Schlueter J."/>
            <person name="Ma J."/>
            <person name="Mitros T."/>
            <person name="Nelson W."/>
            <person name="Hyten D.L."/>
            <person name="Song Q."/>
            <person name="Thelen J.J."/>
            <person name="Cheng J."/>
            <person name="Xu D."/>
            <person name="Hellsten U."/>
            <person name="May G.D."/>
            <person name="Yu Y."/>
            <person name="Sakurai T."/>
            <person name="Umezawa T."/>
            <person name="Bhattacharyya M.K."/>
            <person name="Sandhu D."/>
            <person name="Valliyodan B."/>
            <person name="Lindquist E."/>
            <person name="Peto M."/>
            <person name="Grant D."/>
            <person name="Shu S."/>
            <person name="Goodstein D."/>
            <person name="Barry K."/>
            <person name="Futrell-Griggs M."/>
            <person name="Abernathy B."/>
            <person name="Du J."/>
            <person name="Tian Z."/>
            <person name="Zhu L."/>
            <person name="Gill N."/>
            <person name="Joshi T."/>
            <person name="Libault M."/>
            <person name="Sethuraman A."/>
            <person name="Zhang X.-C."/>
            <person name="Shinozaki K."/>
            <person name="Nguyen H.T."/>
            <person name="Wing R.A."/>
            <person name="Cregan P."/>
            <person name="Specht J."/>
            <person name="Grimwood J."/>
            <person name="Rokhsar D."/>
            <person name="Stacey G."/>
            <person name="Shoemaker R.C."/>
            <person name="Jackson S.A."/>
        </authorList>
    </citation>
    <scope>NUCLEOTIDE SEQUENCE [LARGE SCALE GENOMIC DNA]</scope>
    <source>
        <strain>cv. Williams 82</strain>
        <tissue>Callus</tissue>
    </source>
</reference>
<reference key="4">
    <citation type="journal article" date="1973" name="Acta Chem. Scand.">
        <title>The primary structure of soybean leghemoglobin. IV. Fractionation and sequence of thermolytic peptides of the apoprotein of the slow component (Lba).</title>
        <authorList>
            <person name="Ellfolk N."/>
            <person name="Sievers G."/>
        </authorList>
    </citation>
    <scope>PROTEIN SEQUENCE OF 2-144</scope>
</reference>
<reference key="5">
    <citation type="journal article" date="1974" name="Acta Chem. Scand. B">
        <title>Correction of the amino acid sequence of soybean leghemoglobin alpha.</title>
        <authorList>
            <person name="Ellfolk N."/>
            <person name="Sievers G."/>
        </authorList>
    </citation>
    <scope>SEQUENCE REVISION TO 51-55</scope>
</reference>
<reference key="6">
    <citation type="journal article" date="2007" name="Gene">
        <title>Plant hemoglobins: what we know six decades after their discovery.</title>
        <authorList>
            <person name="Garrocho-Villegas V."/>
            <person name="Gopalasubramaniam S.K."/>
            <person name="Arredondo-Peter R."/>
        </authorList>
    </citation>
    <scope>REVIEW ON PHYTOGLOBINS</scope>
</reference>
<reference key="7">
    <citation type="journal article" date="2007" name="Microbiology">
        <title>The contribution of bacteroidal nitrate and nitrite reduction to the formation of nitrosylleghaemoglobin complexes in soybean root nodules.</title>
        <authorList>
            <person name="Meakin G.E."/>
            <person name="Bueno E."/>
            <person name="Jepson B."/>
            <person name="Bedmar E.J."/>
            <person name="Richardson D.J."/>
            <person name="Delgado M.J."/>
        </authorList>
    </citation>
    <scope>NITRATION</scope>
    <scope>UV-VISIBLE SPECTROSCOPY</scope>
    <scope>ELECTRON PARAMAGNETIC RESONANCE</scope>
    <source>
        <strain>cv. Williams</strain>
    </source>
</reference>
<reference key="8">
    <citation type="journal article" date="2008" name="Colloids Surf. B Biointerfaces">
        <title>Soil applied cobalt alters the nodulation, leg-haemoglobin content and antioxidant status of Glycine max (L.) Merr.</title>
        <authorList>
            <person name="Jayakumar K."/>
            <person name="Vijayarengan P."/>
            <person name="Changxing Z."/>
            <person name="Gomathinayagam M."/>
            <person name="Jaleel C.A."/>
        </authorList>
    </citation>
    <scope>REPRESSION BY COBALT</scope>
</reference>
<reference key="9">
    <citation type="journal article" date="2012" name="Proc. Natl. Acad. Sci. U.S.A.">
        <title>Leghemoglobin green derivatives with nitrated hemes evidence production of highly reactive nitrogen species during aging of legume nodules.</title>
        <authorList>
            <person name="Navascues J."/>
            <person name="Perez-Rontome C."/>
            <person name="Gay M."/>
            <person name="Marcos M."/>
            <person name="Yang F."/>
            <person name="Walker F.A."/>
            <person name="Desbois A."/>
            <person name="Abian J."/>
            <person name="Becana M."/>
        </authorList>
    </citation>
    <scope>FUNCTION</scope>
    <scope>NITRATION</scope>
    <scope>UV-VISIBLE; MASS SPECTROMETRY; NMR AND RESONANCE RAMAN SPECTROSCOPIES</scope>
    <scope>ACETYLATION AT VAL-2</scope>
    <source>
        <strain>cv. Hobbit</strain>
        <strain>cv. Williams</strain>
    </source>
</reference>
<reference key="10">
    <citation type="journal article" date="2015" name="Plant J.">
        <title>Leghemoglobin is nitrated in functional legume nodules in a tyrosine residue within the heme cavity by a nitrite/peroxide-dependent mechanism.</title>
        <authorList>
            <person name="Sainz M."/>
            <person name="Calvo-Begueria L."/>
            <person name="Perez-Rontome C."/>
            <person name="Wienkoop S."/>
            <person name="Abian J."/>
            <person name="Staudinger C."/>
            <person name="Bartesaghi S."/>
            <person name="Radi R."/>
            <person name="Becana M."/>
        </authorList>
    </citation>
    <scope>NITRATION AT TYR-26; TYR-31 AND TYR-134</scope>
</reference>
<reference key="11">
    <citation type="journal article" date="2018" name="Spectrochim. Acta A Mol. Biomol. Spectrosc.">
        <title>Comparative analysis of the heme iron electronic structure and stereochemistry in tetrameric rabbit hemoglobin and monomeric soybean leghemoglobin a using Moessbauer spectroscopy with a high velocity resolution.</title>
        <authorList>
            <person name="Alenkina I.V."/>
            <person name="Kumar A."/>
            <person name="Berkovsky A.L."/>
            <person name="Oshtrakh M.I."/>
        </authorList>
    </citation>
    <scope>MOSSBAUER SPECTROSCOPY</scope>
    <scope>FUNCTION</scope>
    <scope>HEME-BINDING</scope>
    <scope>OXYGEN-BINDING</scope>
</reference>
<reference key="12">
    <citation type="journal article" date="2018" name="J. Exp. Bot.">
        <title>Redefining nitric oxide production in legume nodules through complementary insights from electron paramagnetic resonance spectroscopy and specific fluorescent probes.</title>
        <authorList>
            <person name="Calvo-Begueria L."/>
            <person name="Rubio M.C."/>
            <person name="Martinez J.I."/>
            <person name="Perez-Rontome C."/>
            <person name="Delgado M.J."/>
            <person name="Bedmar E.J."/>
            <person name="Becana M."/>
        </authorList>
    </citation>
    <scope>FUNCTION</scope>
    <scope>ELECTRON PARAMAGNETIC RESONANCE SPECTROSCOPY</scope>
    <source>
        <strain>cv. Contender</strain>
    </source>
</reference>
<reference key="13">
    <citation type="journal article" date="2019" name="Mol. Plant Microbe Interact.">
        <title>Hydrogen sulfide promotes nodulation and nitrogen fixation in soybean-rhizobia symbiotic system.</title>
        <authorList>
            <person name="Zou H."/>
            <person name="Zhang N.-N."/>
            <person name="Pan Q."/>
            <person name="Zhang J.-H."/>
            <person name="Chen J."/>
            <person name="Wei G.-H."/>
        </authorList>
    </citation>
    <scope>INDUCTION BY HYDROGEN SULFIDE</scope>
</reference>
<reference key="14">
    <citation type="journal article" date="2020" name="Ann. Bot.">
        <title>Excess nitrate induces nodule greening and reduces transcript and protein expression levels of soybean leghaemoglobins.</title>
        <authorList>
            <person name="Du M."/>
            <person name="Gao Z."/>
            <person name="Li X."/>
            <person name="Liao H."/>
        </authorList>
    </citation>
    <scope>FUNCTION</scope>
    <scope>TISSUE SPECIFICITY</scope>
    <scope>DEVELOPMENTAL STAGE</scope>
    <scope>SUPPRESSED BY NITROGEN</scope>
    <scope>GENE FAMILY</scope>
    <scope>NOMENCLATURE</scope>
    <source>
        <strain>cv. HN66</strain>
    </source>
</reference>
<reference key="15">
    <citation type="journal article" date="2022" name="ACS Nano">
        <title>Fe-based nanomaterial-induced root nodulation is modulated by flavonoids to improve soybean (Glycine max) growth and quality.</title>
        <authorList>
            <person name="Wang J."/>
            <person name="Cao X."/>
            <person name="Wang C."/>
            <person name="Chen F."/>
            <person name="Feng Y."/>
            <person name="Yue L."/>
            <person name="Wang Z."/>
            <person name="Xing B."/>
        </authorList>
    </citation>
    <scope>INDUCTION BY IRON-BASED NANOMATERIAL</scope>
</reference>
<reference key="16">
    <citation type="journal article" date="2022" name="Gene">
        <title>Uncovering the roles of hemoglobins in soybean facing water stress.</title>
        <authorList>
            <person name="Koltun A."/>
            <person name="Fuhrmann-Aoyagi M.B."/>
            <person name="Cardoso Moraes L.A."/>
            <person name="Lima Nepomuceno A."/>
            <person name="Simoes Azeredo Goncalves L."/>
            <person name="Mertz-Henning L.M."/>
        </authorList>
    </citation>
    <scope>FUNCTION</scope>
    <scope>GENE FAMILY</scope>
    <scope>NOMENCLATURE</scope>
    <source>
        <strain>cv. BR-4</strain>
        <strain>cv. Embrapa 45</strain>
    </source>
</reference>
<reference key="17">
    <citation type="journal article" date="1994" name="Eur. J. Biochem.">
        <title>1H resonance assignments and secondary structure of the carbon monoxide complex of soybean leghemoglobin determined by homonuclear two-dimensional and three-dimensional NMR spectroscopy.</title>
        <authorList>
            <person name="Morikis D."/>
            <person name="Lepre C.A."/>
            <person name="Wright P.E."/>
        </authorList>
    </citation>
    <scope>STRUCTURE BY NMR</scope>
</reference>
<reference key="18">
    <citation type="journal article" date="1997" name="Acta Crystallogr. D">
        <title>Structure of ferric soybean leghemoglobin A nicotinate at 2.3-A resolution.</title>
        <authorList>
            <person name="Ellis P.J."/>
            <person name="Appleby C.A."/>
            <person name="Guss J.M."/>
            <person name="Hunter W.N."/>
            <person name="Ollis D.L."/>
            <person name="Freeman H.C."/>
        </authorList>
    </citation>
    <scope>X-RAY CRYSTALLOGRAPHY (2.3 ANGSTROMS)</scope>
    <scope>SUBUNIT</scope>
</reference>
<reference key="19">
    <citation type="journal article" date="1997" name="J. Mol. Biol.">
        <title>Characterization of recombinant soybean leghemoglobin a and apolar distal histidine mutants.</title>
        <authorList>
            <person name="Hargrove M.S."/>
            <person name="Barry J.K."/>
            <person name="Brucker E.A."/>
            <person name="Berry M.B."/>
            <person name="Phillips G.N. Jr."/>
            <person name="Olson J.S."/>
            <person name="Arredondo-Peter R."/>
            <person name="Dean J.M."/>
            <person name="Klucas R.V."/>
            <person name="Sarath G."/>
        </authorList>
    </citation>
    <scope>X-RAY CRYSTALLOGRAPHY (2.2 ANGSTROMS)</scope>
</reference>
<dbReference type="EMBL" id="V00453">
    <property type="protein sequence ID" value="CAA23731.1"/>
    <property type="molecule type" value="Genomic_DNA"/>
</dbReference>
<dbReference type="EMBL" id="BT092268">
    <property type="protein sequence ID" value="ACU16517.1"/>
    <property type="molecule type" value="mRNA"/>
</dbReference>
<dbReference type="EMBL" id="CM000843">
    <property type="protein sequence ID" value="KRH34687.1"/>
    <property type="molecule type" value="Genomic_DNA"/>
</dbReference>
<dbReference type="PIR" id="A93447">
    <property type="entry name" value="GPSYS"/>
</dbReference>
<dbReference type="RefSeq" id="NP_001235928.1">
    <property type="nucleotide sequence ID" value="NM_001248999.3"/>
</dbReference>
<dbReference type="PDB" id="1BIN">
    <property type="method" value="X-ray"/>
    <property type="resolution" value="2.20 A"/>
    <property type="chains" value="A/B=2-144"/>
</dbReference>
<dbReference type="PDB" id="1FSL">
    <property type="method" value="X-ray"/>
    <property type="resolution" value="2.30 A"/>
    <property type="chains" value="A/B=2-144"/>
</dbReference>
<dbReference type="PDBsum" id="1BIN"/>
<dbReference type="PDBsum" id="1FSL"/>
<dbReference type="SMR" id="P02238"/>
<dbReference type="STRING" id="3847.P02238"/>
<dbReference type="PaxDb" id="3847-GLYMA10G34290.1"/>
<dbReference type="ProMEX" id="P02238"/>
<dbReference type="EnsemblPlants" id="KRH34687">
    <property type="protein sequence ID" value="KRH34687"/>
    <property type="gene ID" value="GLYMA_10G199100"/>
</dbReference>
<dbReference type="GeneID" id="100527427"/>
<dbReference type="Gramene" id="KRH34687">
    <property type="protein sequence ID" value="KRH34687"/>
    <property type="gene ID" value="GLYMA_10G199100"/>
</dbReference>
<dbReference type="KEGG" id="gmx:100527427"/>
<dbReference type="eggNOG" id="KOG3378">
    <property type="taxonomic scope" value="Eukaryota"/>
</dbReference>
<dbReference type="HOGENOM" id="CLU_003827_11_2_1"/>
<dbReference type="InParanoid" id="P02238"/>
<dbReference type="OMA" id="VQESHFE"/>
<dbReference type="OrthoDB" id="2012505at2759"/>
<dbReference type="EvolutionaryTrace" id="P02238"/>
<dbReference type="Proteomes" id="UP000008827">
    <property type="component" value="Chromosome 10"/>
</dbReference>
<dbReference type="GO" id="GO:0005829">
    <property type="term" value="C:cytosol"/>
    <property type="evidence" value="ECO:0007669"/>
    <property type="project" value="UniProtKB-SubCell"/>
</dbReference>
<dbReference type="GO" id="GO:0005634">
    <property type="term" value="C:nucleus"/>
    <property type="evidence" value="ECO:0007669"/>
    <property type="project" value="UniProtKB-SubCell"/>
</dbReference>
<dbReference type="GO" id="GO:0020037">
    <property type="term" value="F:heme binding"/>
    <property type="evidence" value="ECO:0007669"/>
    <property type="project" value="InterPro"/>
</dbReference>
<dbReference type="GO" id="GO:0046872">
    <property type="term" value="F:metal ion binding"/>
    <property type="evidence" value="ECO:0007669"/>
    <property type="project" value="UniProtKB-KW"/>
</dbReference>
<dbReference type="GO" id="GO:0019825">
    <property type="term" value="F:oxygen binding"/>
    <property type="evidence" value="ECO:0007669"/>
    <property type="project" value="InterPro"/>
</dbReference>
<dbReference type="GO" id="GO:0005344">
    <property type="term" value="F:oxygen carrier activity"/>
    <property type="evidence" value="ECO:0007669"/>
    <property type="project" value="UniProtKB-KW"/>
</dbReference>
<dbReference type="GO" id="GO:0009877">
    <property type="term" value="P:nodulation"/>
    <property type="evidence" value="ECO:0000314"/>
    <property type="project" value="UniProtKB"/>
</dbReference>
<dbReference type="GO" id="GO:0032025">
    <property type="term" value="P:response to cobalt ion"/>
    <property type="evidence" value="ECO:0000270"/>
    <property type="project" value="UniProtKB"/>
</dbReference>
<dbReference type="GO" id="GO:1904880">
    <property type="term" value="P:response to hydrogen sulfide"/>
    <property type="evidence" value="ECO:0000270"/>
    <property type="project" value="UniProtKB"/>
</dbReference>
<dbReference type="GO" id="GO:1901698">
    <property type="term" value="P:response to nitrogen compound"/>
    <property type="evidence" value="ECO:0000270"/>
    <property type="project" value="UniProtKB"/>
</dbReference>
<dbReference type="CDD" id="cd08923">
    <property type="entry name" value="class1-2_nsHbs_Lbs"/>
    <property type="match status" value="1"/>
</dbReference>
<dbReference type="Gene3D" id="1.10.490.10">
    <property type="entry name" value="Globins"/>
    <property type="match status" value="1"/>
</dbReference>
<dbReference type="InterPro" id="IPR000971">
    <property type="entry name" value="Globin"/>
</dbReference>
<dbReference type="InterPro" id="IPR009050">
    <property type="entry name" value="Globin-like_sf"/>
</dbReference>
<dbReference type="InterPro" id="IPR012292">
    <property type="entry name" value="Globin/Proto"/>
</dbReference>
<dbReference type="InterPro" id="IPR001032">
    <property type="entry name" value="Leghaemoglobin-like"/>
</dbReference>
<dbReference type="InterPro" id="IPR019824">
    <property type="entry name" value="Leghaemoglobin_Fe_BS"/>
</dbReference>
<dbReference type="PANTHER" id="PTHR22924">
    <property type="entry name" value="LEGHEMOGLOBIN-RELATED"/>
    <property type="match status" value="1"/>
</dbReference>
<dbReference type="PANTHER" id="PTHR22924:SF92">
    <property type="entry name" value="NON-SYMBIOTIC HEMOGLOBIN 2"/>
    <property type="match status" value="1"/>
</dbReference>
<dbReference type="Pfam" id="PF00042">
    <property type="entry name" value="Globin"/>
    <property type="match status" value="1"/>
</dbReference>
<dbReference type="PRINTS" id="PR00188">
    <property type="entry name" value="PLANTGLOBIN"/>
</dbReference>
<dbReference type="SUPFAM" id="SSF46458">
    <property type="entry name" value="Globin-like"/>
    <property type="match status" value="1"/>
</dbReference>
<dbReference type="PROSITE" id="PS01033">
    <property type="entry name" value="GLOBIN"/>
    <property type="match status" value="1"/>
</dbReference>
<dbReference type="PROSITE" id="PS00208">
    <property type="entry name" value="PLANT_GLOBIN"/>
    <property type="match status" value="1"/>
</dbReference>
<feature type="initiator methionine" description="Removed" evidence="14 23">
    <location>
        <position position="1"/>
    </location>
</feature>
<feature type="chain" id="PRO_0000193002" description="Leghemoglobin 3">
    <location>
        <begin position="2"/>
        <end position="144"/>
    </location>
</feature>
<feature type="domain" description="Globin" evidence="3">
    <location>
        <begin position="3"/>
        <end position="144"/>
    </location>
</feature>
<feature type="binding site" evidence="1">
    <location>
        <position position="46"/>
    </location>
    <ligand>
        <name>heme b</name>
        <dbReference type="ChEBI" id="CHEBI:60344"/>
    </ligand>
</feature>
<feature type="binding site" evidence="1">
    <location>
        <position position="62"/>
    </location>
    <ligand>
        <name>O2</name>
        <dbReference type="ChEBI" id="CHEBI:15379"/>
    </ligand>
</feature>
<feature type="binding site" evidence="1">
    <location>
        <position position="65"/>
    </location>
    <ligand>
        <name>heme b</name>
        <dbReference type="ChEBI" id="CHEBI:60344"/>
    </ligand>
</feature>
<feature type="binding site" description="proximal binding residue" evidence="3 9">
    <location>
        <position position="93"/>
    </location>
    <ligand>
        <name>heme b</name>
        <dbReference type="ChEBI" id="CHEBI:60344"/>
    </ligand>
    <ligandPart>
        <name>Fe</name>
        <dbReference type="ChEBI" id="CHEBI:18248"/>
    </ligandPart>
</feature>
<feature type="binding site" evidence="1">
    <location>
        <position position="96"/>
    </location>
    <ligand>
        <name>heme b</name>
        <dbReference type="ChEBI" id="CHEBI:60344"/>
    </ligand>
</feature>
<feature type="modified residue" description="N-acetylvaline" evidence="7">
    <location>
        <position position="2"/>
    </location>
</feature>
<feature type="modified residue" description="Nitrated tyrosine" evidence="8">
    <location>
        <position position="26"/>
    </location>
</feature>
<feature type="modified residue" description="Nitrated tyrosine" evidence="8">
    <location>
        <position position="31"/>
    </location>
</feature>
<feature type="modified residue" description="Phosphoserine" evidence="2">
    <location>
        <position position="46"/>
    </location>
</feature>
<feature type="modified residue" description="Nitrated tyrosine" evidence="8">
    <location>
        <position position="134"/>
    </location>
</feature>
<feature type="sequence conflict" description="In Ref. 4; AA sequence." evidence="22" ref="4">
    <original>D</original>
    <variation>N</variation>
    <location>
        <position position="100"/>
    </location>
</feature>
<feature type="sequence conflict" description="In Ref. 4; AA sequence." evidence="22" ref="4">
    <original>Q</original>
    <variation>E</variation>
    <location>
        <position position="102"/>
    </location>
</feature>
<feature type="sequence conflict" description="In Ref. 4; AA sequence." evidence="22" ref="4">
    <location>
        <position position="106"/>
    </location>
</feature>
<feature type="sequence conflict" description="In Ref. 4; AA sequence." evidence="22" ref="4">
    <original>KA</original>
    <variation>AK</variation>
    <location>
        <begin position="143"/>
        <end position="144"/>
    </location>
</feature>
<feature type="helix" evidence="25">
    <location>
        <begin position="6"/>
        <end position="21"/>
    </location>
</feature>
<feature type="helix" evidence="25">
    <location>
        <begin position="23"/>
        <end position="37"/>
    </location>
</feature>
<feature type="helix" evidence="25">
    <location>
        <begin position="41"/>
        <end position="44"/>
    </location>
</feature>
<feature type="helix" evidence="25">
    <location>
        <begin position="46"/>
        <end position="48"/>
    </location>
</feature>
<feature type="helix" evidence="25">
    <location>
        <begin position="57"/>
        <end position="80"/>
    </location>
</feature>
<feature type="helix" evidence="25">
    <location>
        <begin position="87"/>
        <end position="93"/>
    </location>
</feature>
<feature type="turn" evidence="25">
    <location>
        <begin position="94"/>
        <end position="97"/>
    </location>
</feature>
<feature type="helix" evidence="25">
    <location>
        <begin position="100"/>
        <end position="118"/>
    </location>
</feature>
<feature type="helix" evidence="25">
    <location>
        <begin position="119"/>
        <end position="121"/>
    </location>
</feature>
<feature type="helix" evidence="25">
    <location>
        <begin position="124"/>
        <end position="143"/>
    </location>
</feature>
<comment type="function">
    <text evidence="7 9 10 12 16">Leghemoglobin that reversibly binds oxygen O(2) through a pentacoordinated heme iron (PubMed:29100196). In root nodules, facilitates the diffusion of oxygen to the bacteroids while preventing the bacterial nitrogenase from being inactivated by buffering dioxygen, nitric oxide and carbon monoxide, and promoting the formation of reactive oxygen species (ROS, e.g. H(2)O(2)) (PubMed:17540516, PubMed:22308405, PubMed:29701804, PubMed:32297921). This role is essential for symbiotic nitrogen fixation (SNF) (PubMed:17540516, PubMed:32297921).</text>
</comment>
<comment type="subunit">
    <text evidence="4">Monomer.</text>
</comment>
<comment type="subcellular location">
    <subcellularLocation>
        <location evidence="1">Cytoplasm</location>
        <location evidence="1">Cytosol</location>
    </subcellularLocation>
    <subcellularLocation>
        <location evidence="1">Nucleus</location>
    </subcellularLocation>
</comment>
<comment type="tissue specificity">
    <text evidence="12">Specifically expressed in root nodules.</text>
</comment>
<comment type="developmental stage">
    <text evidence="12">Gradual accumulation in developping and maturating root nodules (PubMed:32297921). Levels decline during nodule senescence (PubMed:32297921).</text>
</comment>
<comment type="induction">
    <text evidence="6 11 12 13">Negatively regulated by cobalt (Co) in a dose-dependent manner (PubMed:18838253). Induced by hydrogen sulfide H(2)S (PubMed:31204904). Suppressed by exposure to excess nitrogen (N); this repression is associated with nodule greening and reduced biological nitrogen fixation (BN) efficiency (PubMed:32297921). Induced by iron-based nanomaterial (Fe-NMs) (PubMed:36479882).</text>
</comment>
<comment type="PTM">
    <text evidence="5 7 8">Nitrated mainly at Tyr-31 and, to a lower extent, at Tyr-26 and Tyr-134, in effective nodules and particularly in hypoxic conditions; this mechanism may play a protective role in the symbiosis by buffering toxic peroxynitrite NO(2)(-) (PubMed:17259612, PubMed:22308405, PubMed:25603991). Nitration level decrease during nodule senescence (PubMed:17259612, PubMed:22308405, PubMed:25603991).</text>
</comment>
<comment type="PTM">
    <text evidence="2">Phosphorylation at Ser-46 disrupts the molecular environment of its porphyrin ring oxygen binding pocket, thus leading to a reduced oxygen consumption and to the delivery of oxygen O(2) to symbiosomes.</text>
</comment>
<comment type="similarity">
    <text evidence="22">Belongs to the plant globin family.</text>
</comment>
<keyword id="KW-0002">3D-structure</keyword>
<keyword id="KW-0007">Acetylation</keyword>
<keyword id="KW-0963">Cytoplasm</keyword>
<keyword id="KW-0903">Direct protein sequencing</keyword>
<keyword id="KW-0349">Heme</keyword>
<keyword id="KW-0408">Iron</keyword>
<keyword id="KW-0479">Metal-binding</keyword>
<keyword id="KW-0944">Nitration</keyword>
<keyword id="KW-0535">Nitrogen fixation</keyword>
<keyword id="KW-0536">Nodulation</keyword>
<keyword id="KW-0539">Nucleus</keyword>
<keyword id="KW-0561">Oxygen transport</keyword>
<keyword id="KW-0597">Phosphoprotein</keyword>
<keyword id="KW-1185">Reference proteome</keyword>
<keyword id="KW-0813">Transport</keyword>
<proteinExistence type="evidence at protein level"/>
<sequence>MVAFTEKQDALVSSSFEAFKANIPQYSVVFYTSILEKAPAAKDLFSFLANGVDPTNPKLTGHAEKLFALVRDSAGQLKASGTVVADAALGSVHAQKAVTDPQFVVVKEALLKTIKAAVGDKWSDELSRAWEVAYDELAAAIKKA</sequence>
<gene>
    <name evidence="18" type="primary">LB3</name>
    <name evidence="19" type="synonym">GLB2-4</name>
    <name evidence="17 19 20 21" type="synonym">LBA</name>
    <name evidence="24" type="ordered locus">Glyma_10G199100</name>
</gene>